<comment type="function">
    <text evidence="1">May act as a scaffolding protein within caveolar membranes, functionally participating in formation of caveolae or caveolae-like vesicles. May be involved in epidermal cell adhesion and epidermal structure and function (By similarity).</text>
</comment>
<comment type="subunit">
    <text evidence="1">Heterooligomeric complex of flotillin-1 and flotillin-2 and caveolin-1 and caveolin-2. Interacts with ECPAS.</text>
</comment>
<comment type="subcellular location">
    <subcellularLocation>
        <location evidence="1">Cell membrane</location>
        <topology evidence="1">Peripheral membrane protein</topology>
    </subcellularLocation>
    <subcellularLocation>
        <location evidence="1">Membrane</location>
        <location evidence="1">Caveola</location>
        <topology>Peripheral membrane protein</topology>
    </subcellularLocation>
    <subcellularLocation>
        <location evidence="1">Endosome</location>
    </subcellularLocation>
    <subcellularLocation>
        <location evidence="2">Membrane</location>
        <topology evidence="2">Lipid-anchor</topology>
    </subcellularLocation>
    <text evidence="1">Membrane-associated protein of caveolae.</text>
</comment>
<comment type="PTM">
    <text evidence="1">ZDHHC5-catalyzed palmitoylation may be required for the formation of higher-order complexes and for neurite outgrowth in cultured neural stem cells.</text>
</comment>
<comment type="similarity">
    <text evidence="3">Belongs to the band 7/mec-2 family. Flotillin subfamily.</text>
</comment>
<reference key="1">
    <citation type="submission" date="2007-06" db="EMBL/GenBank/DDBJ databases">
        <authorList>
            <consortium name="NIH - Mammalian Gene Collection (MGC) project"/>
        </authorList>
    </citation>
    <scope>NUCLEOTIDE SEQUENCE [LARGE SCALE MRNA]</scope>
    <source>
        <strain>Hereford</strain>
        <tissue>Hippocampus</tissue>
    </source>
</reference>
<name>FLOT2_BOVIN</name>
<dbReference type="EMBL" id="BC148058">
    <property type="protein sequence ID" value="AAI48059.1"/>
    <property type="molecule type" value="mRNA"/>
</dbReference>
<dbReference type="RefSeq" id="NP_001030543.2">
    <property type="nucleotide sequence ID" value="NM_001035466.2"/>
</dbReference>
<dbReference type="BMRB" id="A6QLR4"/>
<dbReference type="SMR" id="A6QLR4"/>
<dbReference type="FunCoup" id="A6QLR4">
    <property type="interactions" value="1142"/>
</dbReference>
<dbReference type="IntAct" id="A6QLR4">
    <property type="interactions" value="1"/>
</dbReference>
<dbReference type="MINT" id="A6QLR4"/>
<dbReference type="STRING" id="9913.ENSBTAP00000061438"/>
<dbReference type="SwissPalm" id="A6QLR4"/>
<dbReference type="PaxDb" id="9913-ENSBTAP00000013288"/>
<dbReference type="PeptideAtlas" id="A6QLR4"/>
<dbReference type="GeneID" id="615679"/>
<dbReference type="KEGG" id="bta:615679"/>
<dbReference type="CTD" id="2319"/>
<dbReference type="VEuPathDB" id="HostDB:ENSBTAG00000010073"/>
<dbReference type="eggNOG" id="KOG2668">
    <property type="taxonomic scope" value="Eukaryota"/>
</dbReference>
<dbReference type="HOGENOM" id="CLU_038134_1_0_1"/>
<dbReference type="InParanoid" id="A6QLR4"/>
<dbReference type="OMA" id="MWRVAEP"/>
<dbReference type="OrthoDB" id="6080404at2759"/>
<dbReference type="Reactome" id="R-BTA-5213460">
    <property type="pathway name" value="RIPK1-mediated regulated necrosis"/>
</dbReference>
<dbReference type="Reactome" id="R-BTA-5675482">
    <property type="pathway name" value="Regulation of necroptotic cell death"/>
</dbReference>
<dbReference type="Reactome" id="R-BTA-8849932">
    <property type="pathway name" value="Synaptic adhesion-like molecules"/>
</dbReference>
<dbReference type="Reactome" id="R-BTA-8980692">
    <property type="pathway name" value="RHOA GTPase cycle"/>
</dbReference>
<dbReference type="Reactome" id="R-BTA-9013106">
    <property type="pathway name" value="RHOC GTPase cycle"/>
</dbReference>
<dbReference type="Reactome" id="R-BTA-9696264">
    <property type="pathway name" value="RND3 GTPase cycle"/>
</dbReference>
<dbReference type="Reactome" id="R-BTA-9696273">
    <property type="pathway name" value="RND1 GTPase cycle"/>
</dbReference>
<dbReference type="Proteomes" id="UP000009136">
    <property type="component" value="Chromosome 19"/>
</dbReference>
<dbReference type="Bgee" id="ENSBTAG00000010073">
    <property type="expression patterns" value="Expressed in cardiac ventricle and 106 other cell types or tissues"/>
</dbReference>
<dbReference type="GO" id="GO:0031410">
    <property type="term" value="C:cytoplasmic vesicle"/>
    <property type="evidence" value="ECO:0000318"/>
    <property type="project" value="GO_Central"/>
</dbReference>
<dbReference type="GO" id="GO:0030139">
    <property type="term" value="C:endocytic vesicle"/>
    <property type="evidence" value="ECO:0000250"/>
    <property type="project" value="UniProtKB"/>
</dbReference>
<dbReference type="GO" id="GO:0005768">
    <property type="term" value="C:endosome"/>
    <property type="evidence" value="ECO:0000250"/>
    <property type="project" value="UniProtKB"/>
</dbReference>
<dbReference type="GO" id="GO:0016600">
    <property type="term" value="C:flotillin complex"/>
    <property type="evidence" value="ECO:0000318"/>
    <property type="project" value="GO_Central"/>
</dbReference>
<dbReference type="GO" id="GO:0005886">
    <property type="term" value="C:plasma membrane"/>
    <property type="evidence" value="ECO:0000318"/>
    <property type="project" value="GO_Central"/>
</dbReference>
<dbReference type="GO" id="GO:0002020">
    <property type="term" value="F:protease binding"/>
    <property type="evidence" value="ECO:0000318"/>
    <property type="project" value="GO_Central"/>
</dbReference>
<dbReference type="GO" id="GO:0007155">
    <property type="term" value="P:cell adhesion"/>
    <property type="evidence" value="ECO:0007669"/>
    <property type="project" value="UniProtKB-KW"/>
</dbReference>
<dbReference type="GO" id="GO:0072659">
    <property type="term" value="P:protein localization to plasma membrane"/>
    <property type="evidence" value="ECO:0000318"/>
    <property type="project" value="GO_Central"/>
</dbReference>
<dbReference type="GO" id="GO:0045661">
    <property type="term" value="P:regulation of myoblast differentiation"/>
    <property type="evidence" value="ECO:0000318"/>
    <property type="project" value="GO_Central"/>
</dbReference>
<dbReference type="CDD" id="cd03399">
    <property type="entry name" value="SPFH_flotillin"/>
    <property type="match status" value="1"/>
</dbReference>
<dbReference type="FunFam" id="3.30.479.30:FF:000003">
    <property type="entry name" value="Flotillin 2"/>
    <property type="match status" value="1"/>
</dbReference>
<dbReference type="Gene3D" id="3.30.479.30">
    <property type="entry name" value="Band 7 domain"/>
    <property type="match status" value="1"/>
</dbReference>
<dbReference type="InterPro" id="IPR001107">
    <property type="entry name" value="Band_7"/>
</dbReference>
<dbReference type="InterPro" id="IPR036013">
    <property type="entry name" value="Band_7/SPFH_dom_sf"/>
</dbReference>
<dbReference type="InterPro" id="IPR031905">
    <property type="entry name" value="Flotillin_C"/>
</dbReference>
<dbReference type="InterPro" id="IPR027705">
    <property type="entry name" value="Flotillin_fam"/>
</dbReference>
<dbReference type="PANTHER" id="PTHR13806:SF46">
    <property type="entry name" value="FLOTILLIN-1-RELATED"/>
    <property type="match status" value="1"/>
</dbReference>
<dbReference type="PANTHER" id="PTHR13806">
    <property type="entry name" value="FLOTILLIN-RELATED"/>
    <property type="match status" value="1"/>
</dbReference>
<dbReference type="Pfam" id="PF01145">
    <property type="entry name" value="Band_7"/>
    <property type="match status" value="1"/>
</dbReference>
<dbReference type="Pfam" id="PF15975">
    <property type="entry name" value="Flot"/>
    <property type="match status" value="1"/>
</dbReference>
<dbReference type="SMART" id="SM00244">
    <property type="entry name" value="PHB"/>
    <property type="match status" value="1"/>
</dbReference>
<dbReference type="SUPFAM" id="SSF117892">
    <property type="entry name" value="Band 7/SPFH domain"/>
    <property type="match status" value="1"/>
</dbReference>
<protein>
    <recommendedName>
        <fullName>Flotillin-2</fullName>
    </recommendedName>
</protein>
<organism>
    <name type="scientific">Bos taurus</name>
    <name type="common">Bovine</name>
    <dbReference type="NCBI Taxonomy" id="9913"/>
    <lineage>
        <taxon>Eukaryota</taxon>
        <taxon>Metazoa</taxon>
        <taxon>Chordata</taxon>
        <taxon>Craniata</taxon>
        <taxon>Vertebrata</taxon>
        <taxon>Euteleostomi</taxon>
        <taxon>Mammalia</taxon>
        <taxon>Eutheria</taxon>
        <taxon>Laurasiatheria</taxon>
        <taxon>Artiodactyla</taxon>
        <taxon>Ruminantia</taxon>
        <taxon>Pecora</taxon>
        <taxon>Bovidae</taxon>
        <taxon>Bovinae</taxon>
        <taxon>Bos</taxon>
    </lineage>
</organism>
<proteinExistence type="evidence at transcript level"/>
<feature type="initiator methionine" description="Removed" evidence="2">
    <location>
        <position position="1"/>
    </location>
</feature>
<feature type="chain" id="PRO_0000379783" description="Flotillin-2">
    <location>
        <begin position="2"/>
        <end position="428"/>
    </location>
</feature>
<feature type="modified residue" description="Phosphoserine" evidence="2">
    <location>
        <position position="405"/>
    </location>
</feature>
<feature type="lipid moiety-binding region" description="N-myristoyl glycine" evidence="2">
    <location>
        <position position="2"/>
    </location>
</feature>
<feature type="lipid moiety-binding region" description="S-palmitoyl cysteine; by ZDHHC5" evidence="1">
    <location>
        <position position="4"/>
    </location>
</feature>
<feature type="lipid moiety-binding region" description="S-palmitoyl cysteine" evidence="1">
    <location>
        <position position="19"/>
    </location>
</feature>
<feature type="lipid moiety-binding region" description="S-palmitoyl cysteine; by ZDHHC5" evidence="1">
    <location>
        <position position="20"/>
    </location>
</feature>
<sequence>MGNCHTVGPNEALVVSGGCCGSDYKQYVFGGWAWAWWCISDTQRISLEIMTLQPRCEDVETAEGVALTVTGVAQVKIMTEKELLAVACEQFLGKSVQDIKNVVLQTLEGHLRSILGTLTVEQIYQDRDQFAKLVREVAAPDVGRMGIEILSFTIKDVYDKVDYLSSLGKTQTAVVQRDADIGVAEAERDAGIREAECKKEMLDVKFMADTKIADSKRAFELQKSAFSEEVNIKTAEAQLAYELQGAREQQKIRQEEIEIEVVQRKKQIAVEAQEILRTDKELIATVRCPAEAEAHRIQQIAEGEKVKQVLLAQAEAEKIRKIGEAEAAVIEARGKAEAERMKLKAEAYQKYGDAAKMALVLDALPRIAAKIAAPLTKVDEIVVLSGDNSKVTSEVNRLLAELPASVHALTGVDLSKIPLIKKATGAQV</sequence>
<gene>
    <name type="primary">FLOT2</name>
</gene>
<keyword id="KW-0130">Cell adhesion</keyword>
<keyword id="KW-1003">Cell membrane</keyword>
<keyword id="KW-0967">Endosome</keyword>
<keyword id="KW-0449">Lipoprotein</keyword>
<keyword id="KW-0472">Membrane</keyword>
<keyword id="KW-0519">Myristate</keyword>
<keyword id="KW-0564">Palmitate</keyword>
<keyword id="KW-0597">Phosphoprotein</keyword>
<keyword id="KW-1185">Reference proteome</keyword>
<evidence type="ECO:0000250" key="1"/>
<evidence type="ECO:0000250" key="2">
    <source>
        <dbReference type="UniProtKB" id="Q14254"/>
    </source>
</evidence>
<evidence type="ECO:0000305" key="3"/>
<accession>A6QLR4</accession>